<keyword id="KW-1185">Reference proteome</keyword>
<keyword id="KW-0687">Ribonucleoprotein</keyword>
<keyword id="KW-0689">Ribosomal protein</keyword>
<keyword id="KW-0694">RNA-binding</keyword>
<keyword id="KW-0699">rRNA-binding</keyword>
<name>RL23_PELTS</name>
<feature type="chain" id="PRO_1000184100" description="Large ribosomal subunit protein uL23">
    <location>
        <begin position="1"/>
        <end position="95"/>
    </location>
</feature>
<reference key="1">
    <citation type="journal article" date="2008" name="Genome Res.">
        <title>The genome of Pelotomaculum thermopropionicum reveals niche-associated evolution in anaerobic microbiota.</title>
        <authorList>
            <person name="Kosaka T."/>
            <person name="Kato S."/>
            <person name="Shimoyama T."/>
            <person name="Ishii S."/>
            <person name="Abe T."/>
            <person name="Watanabe K."/>
        </authorList>
    </citation>
    <scope>NUCLEOTIDE SEQUENCE [LARGE SCALE GENOMIC DNA]</scope>
    <source>
        <strain>DSM 13744 / JCM 10971 / SI</strain>
    </source>
</reference>
<accession>A5D5J2</accession>
<organism>
    <name type="scientific">Pelotomaculum thermopropionicum (strain DSM 13744 / JCM 10971 / SI)</name>
    <dbReference type="NCBI Taxonomy" id="370438"/>
    <lineage>
        <taxon>Bacteria</taxon>
        <taxon>Bacillati</taxon>
        <taxon>Bacillota</taxon>
        <taxon>Clostridia</taxon>
        <taxon>Eubacteriales</taxon>
        <taxon>Desulfotomaculaceae</taxon>
        <taxon>Pelotomaculum</taxon>
    </lineage>
</organism>
<gene>
    <name evidence="1" type="primary">rplW</name>
    <name type="ordered locus">PTH_0322</name>
</gene>
<evidence type="ECO:0000255" key="1">
    <source>
        <dbReference type="HAMAP-Rule" id="MF_01369"/>
    </source>
</evidence>
<evidence type="ECO:0000305" key="2"/>
<proteinExistence type="inferred from homology"/>
<protein>
    <recommendedName>
        <fullName evidence="1">Large ribosomal subunit protein uL23</fullName>
    </recommendedName>
    <alternativeName>
        <fullName evidence="2">50S ribosomal protein L23</fullName>
    </alternativeName>
</protein>
<comment type="function">
    <text evidence="1">One of the early assembly proteins it binds 23S rRNA. One of the proteins that surrounds the polypeptide exit tunnel on the outside of the ribosome. Forms the main docking site for trigger factor binding to the ribosome.</text>
</comment>
<comment type="subunit">
    <text evidence="1">Part of the 50S ribosomal subunit. Contacts protein L29, and trigger factor when it is bound to the ribosome.</text>
</comment>
<comment type="similarity">
    <text evidence="1">Belongs to the universal ribosomal protein uL23 family.</text>
</comment>
<dbReference type="EMBL" id="AP009389">
    <property type="protein sequence ID" value="BAF58503.1"/>
    <property type="molecule type" value="Genomic_DNA"/>
</dbReference>
<dbReference type="SMR" id="A5D5J2"/>
<dbReference type="STRING" id="370438.PTH_0322"/>
<dbReference type="KEGG" id="pth:PTH_0322"/>
<dbReference type="eggNOG" id="COG0089">
    <property type="taxonomic scope" value="Bacteria"/>
</dbReference>
<dbReference type="HOGENOM" id="CLU_037562_3_2_9"/>
<dbReference type="Proteomes" id="UP000006556">
    <property type="component" value="Chromosome"/>
</dbReference>
<dbReference type="GO" id="GO:1990904">
    <property type="term" value="C:ribonucleoprotein complex"/>
    <property type="evidence" value="ECO:0007669"/>
    <property type="project" value="UniProtKB-KW"/>
</dbReference>
<dbReference type="GO" id="GO:0005840">
    <property type="term" value="C:ribosome"/>
    <property type="evidence" value="ECO:0007669"/>
    <property type="project" value="UniProtKB-KW"/>
</dbReference>
<dbReference type="GO" id="GO:0019843">
    <property type="term" value="F:rRNA binding"/>
    <property type="evidence" value="ECO:0007669"/>
    <property type="project" value="UniProtKB-UniRule"/>
</dbReference>
<dbReference type="GO" id="GO:0003735">
    <property type="term" value="F:structural constituent of ribosome"/>
    <property type="evidence" value="ECO:0007669"/>
    <property type="project" value="InterPro"/>
</dbReference>
<dbReference type="GO" id="GO:0006412">
    <property type="term" value="P:translation"/>
    <property type="evidence" value="ECO:0007669"/>
    <property type="project" value="UniProtKB-UniRule"/>
</dbReference>
<dbReference type="FunFam" id="3.30.70.330:FF:000001">
    <property type="entry name" value="50S ribosomal protein L23"/>
    <property type="match status" value="1"/>
</dbReference>
<dbReference type="Gene3D" id="3.30.70.330">
    <property type="match status" value="1"/>
</dbReference>
<dbReference type="HAMAP" id="MF_01369_B">
    <property type="entry name" value="Ribosomal_uL23_B"/>
    <property type="match status" value="1"/>
</dbReference>
<dbReference type="InterPro" id="IPR012677">
    <property type="entry name" value="Nucleotide-bd_a/b_plait_sf"/>
</dbReference>
<dbReference type="InterPro" id="IPR013025">
    <property type="entry name" value="Ribosomal_uL23-like"/>
</dbReference>
<dbReference type="InterPro" id="IPR012678">
    <property type="entry name" value="Ribosomal_uL23/eL15/eS24_sf"/>
</dbReference>
<dbReference type="NCBIfam" id="NF004359">
    <property type="entry name" value="PRK05738.1-3"/>
    <property type="match status" value="1"/>
</dbReference>
<dbReference type="NCBIfam" id="NF004363">
    <property type="entry name" value="PRK05738.2-4"/>
    <property type="match status" value="1"/>
</dbReference>
<dbReference type="NCBIfam" id="NF004364">
    <property type="entry name" value="PRK05738.2-5"/>
    <property type="match status" value="1"/>
</dbReference>
<dbReference type="NCBIfam" id="NF004366">
    <property type="entry name" value="PRK05738.3-2"/>
    <property type="match status" value="1"/>
</dbReference>
<dbReference type="PANTHER" id="PTHR11620">
    <property type="entry name" value="60S RIBOSOMAL PROTEIN L23A"/>
    <property type="match status" value="1"/>
</dbReference>
<dbReference type="Pfam" id="PF00276">
    <property type="entry name" value="Ribosomal_L23"/>
    <property type="match status" value="1"/>
</dbReference>
<dbReference type="SUPFAM" id="SSF54189">
    <property type="entry name" value="Ribosomal proteins S24e, L23 and L15e"/>
    <property type="match status" value="1"/>
</dbReference>
<sequence length="95" mass="11085">MKDPRDILRKPVVTEKSTSLLQDNKYTFIVDPRANKTEIKEAVEKIFKVKVEKVNTMRVKGRIKRVRNIPGKTPDYKKAIVKLRQGDKIELFEGM</sequence>